<dbReference type="EMBL" id="X14112">
    <property type="protein sequence ID" value="CAA32272.1"/>
    <property type="molecule type" value="Genomic_DNA"/>
</dbReference>
<dbReference type="EMBL" id="X02138">
    <property type="protein sequence ID" value="CAA26062.1"/>
    <property type="molecule type" value="Genomic_DNA"/>
</dbReference>
<dbReference type="EMBL" id="L00036">
    <property type="protein sequence ID" value="AAA96680.1"/>
    <property type="molecule type" value="Genomic_DNA"/>
</dbReference>
<dbReference type="EMBL" id="DQ889502">
    <property type="protein sequence ID" value="ABI63526.1"/>
    <property type="molecule type" value="Genomic_DNA"/>
</dbReference>
<dbReference type="EMBL" id="FJ593289">
    <property type="protein sequence ID" value="ACM62297.1"/>
    <property type="molecule type" value="Genomic_DNA"/>
</dbReference>
<dbReference type="PIR" id="A03733">
    <property type="entry name" value="VGBE18"/>
</dbReference>
<dbReference type="RefSeq" id="YP_009137143.1">
    <property type="nucleotide sequence ID" value="NC_001806.2"/>
</dbReference>
<dbReference type="PDB" id="2GIY">
    <property type="method" value="X-ray"/>
    <property type="resolution" value="1.78 A"/>
    <property type="chains" value="A/B=213-390"/>
</dbReference>
<dbReference type="PDB" id="2GJ7">
    <property type="method" value="X-ray"/>
    <property type="resolution" value="5.00 A"/>
    <property type="chains" value="E/F=21-419"/>
</dbReference>
<dbReference type="PDBsum" id="2GIY"/>
<dbReference type="PDBsum" id="2GJ7"/>
<dbReference type="SMR" id="P04488"/>
<dbReference type="DIP" id="DIP-29186N"/>
<dbReference type="IntAct" id="P04488">
    <property type="interactions" value="1"/>
</dbReference>
<dbReference type="ChEMBL" id="CHEMBL2364696"/>
<dbReference type="DrugCentral" id="P04488"/>
<dbReference type="GlyCosmos" id="P04488">
    <property type="glycosylation" value="2 sites, No reported glycans"/>
</dbReference>
<dbReference type="iPTMnet" id="P04488"/>
<dbReference type="ABCD" id="P04488">
    <property type="antibodies" value="1 sequenced antibody"/>
</dbReference>
<dbReference type="DNASU" id="2703448"/>
<dbReference type="GeneID" id="2703448"/>
<dbReference type="KEGG" id="vg:2703448"/>
<dbReference type="EvolutionaryTrace" id="P04488"/>
<dbReference type="PRO" id="PR:P04488"/>
<dbReference type="Proteomes" id="UP000009294">
    <property type="component" value="Segment"/>
</dbReference>
<dbReference type="Proteomes" id="UP000180652">
    <property type="component" value="Segment"/>
</dbReference>
<dbReference type="GO" id="GO:0044175">
    <property type="term" value="C:host cell endosome membrane"/>
    <property type="evidence" value="ECO:0007669"/>
    <property type="project" value="UniProtKB-SubCell"/>
</dbReference>
<dbReference type="GO" id="GO:0044178">
    <property type="term" value="C:host cell Golgi membrane"/>
    <property type="evidence" value="ECO:0007669"/>
    <property type="project" value="UniProtKB-SubCell"/>
</dbReference>
<dbReference type="GO" id="GO:0044156">
    <property type="term" value="C:host cell junction"/>
    <property type="evidence" value="ECO:0007669"/>
    <property type="project" value="UniProtKB-SubCell"/>
</dbReference>
<dbReference type="GO" id="GO:0016020">
    <property type="term" value="C:membrane"/>
    <property type="evidence" value="ECO:0007669"/>
    <property type="project" value="UniProtKB-KW"/>
</dbReference>
<dbReference type="GO" id="GO:0019031">
    <property type="term" value="C:viral envelope"/>
    <property type="evidence" value="ECO:0007669"/>
    <property type="project" value="UniProtKB-KW"/>
</dbReference>
<dbReference type="GO" id="GO:0055036">
    <property type="term" value="C:virion membrane"/>
    <property type="evidence" value="ECO:0007669"/>
    <property type="project" value="UniProtKB-SubCell"/>
</dbReference>
<dbReference type="GO" id="GO:0042802">
    <property type="term" value="F:identical protein binding"/>
    <property type="evidence" value="ECO:0000353"/>
    <property type="project" value="IntAct"/>
</dbReference>
<dbReference type="Gene3D" id="2.60.40.10">
    <property type="entry name" value="Immunoglobulins"/>
    <property type="match status" value="1"/>
</dbReference>
<dbReference type="InterPro" id="IPR046463">
    <property type="entry name" value="Herpes_gE_N"/>
</dbReference>
<dbReference type="InterPro" id="IPR003404">
    <property type="entry name" value="Herpes_glycopE_Fc"/>
</dbReference>
<dbReference type="InterPro" id="IPR036179">
    <property type="entry name" value="Ig-like_dom_sf"/>
</dbReference>
<dbReference type="InterPro" id="IPR013783">
    <property type="entry name" value="Ig-like_fold"/>
</dbReference>
<dbReference type="Pfam" id="PF02480">
    <property type="entry name" value="Herpes_gE"/>
    <property type="match status" value="1"/>
</dbReference>
<dbReference type="Pfam" id="PF20418">
    <property type="entry name" value="Herpes_gE_N"/>
    <property type="match status" value="1"/>
</dbReference>
<dbReference type="SUPFAM" id="SSF48726">
    <property type="entry name" value="Immunoglobulin"/>
    <property type="match status" value="2"/>
</dbReference>
<proteinExistence type="evidence at protein level"/>
<comment type="function">
    <text evidence="1 4 9">In epithelial cells, the heterodimer gE/gI is required for the cell-to-cell spread of the virus, by sorting nascent virions to cell junctions. Once the virus reaches the cell junctions, virus particles can spread to adjacent cells extremely rapidly through interactions with cellular receptors that accumulate at these junctions. Implicated in basolateral spread in polarized cells (By similarity). In neuronal cells, gE/gI is essential for the anterograde spread of the infection throughout the host nervous system. Together with US9, the heterodimer gE/gI is involved in the sorting and transport of viral structural components toward axon tips.</text>
</comment>
<comment type="function">
    <text>The heterodimer gE/gI serves as a receptor for the Fc part of host IgG. Dissociation of gE/gI from IgG occurs at acidic pH. May thus be involved in anti-HSV antibodies bipolar bridging, followed by intracellular endocytosis and degradation, thereby interfering with host IgG-mediated immune responses.</text>
</comment>
<comment type="subunit">
    <text evidence="1 5 6 7 8 9">Interacts with gI; this interaction enhances the Fc receptor function of gE (By similarity). The heterodimer gE/gI interacts with the Fc part of host IgG. Interacts (via C-terminus) with VP22 tegument protein; this interaction is necessary for the recruitment of VP22 to the Golgi and its packaging into virions. Interacts (via C-terminus) with UL11 tegument protein.</text>
</comment>
<comment type="interaction">
    <interactant intactId="EBI-15581257">
        <id>P04488</id>
    </interactant>
    <interactant intactId="EBI-15581257">
        <id>P04488</id>
        <label>gE</label>
    </interactant>
    <organismsDiffer>false</organismsDiffer>
    <experiments>2</experiments>
</comment>
<comment type="interaction">
    <interactant intactId="EBI-15581257">
        <id>P04488</id>
    </interactant>
    <interactant intactId="EBI-42826219">
        <id>P01857-1</id>
        <label>IGHG1</label>
    </interactant>
    <organismsDiffer>true</organismsDiffer>
    <experiments>2</experiments>
</comment>
<comment type="subcellular location">
    <subcellularLocation>
        <location evidence="1">Virion membrane</location>
        <topology evidence="1">Single-pass type I membrane protein</topology>
    </subcellularLocation>
    <subcellularLocation>
        <location evidence="1">Host cell membrane</location>
        <topology evidence="1">Single-pass type I membrane protein</topology>
    </subcellularLocation>
    <subcellularLocation>
        <location>Host cell junction</location>
    </subcellularLocation>
    <subcellularLocation>
        <location evidence="1">Host Golgi apparatus membrane</location>
        <topology evidence="1">Single-pass membrane protein</topology>
    </subcellularLocation>
    <subcellularLocation>
        <location evidence="1">Host endosome membrane</location>
        <topology evidence="1">Single-pass membrane protein</topology>
    </subcellularLocation>
    <text>During virion morphogenesis, this protein probably accumulates in the endosomes and trans-Golgi where secondary envelopment occurs. It is probably transported to the cell surface from where it is endocytosed and directed to the trans-Golgi network (TGN), maybe through an interaction with PACS-1 sorting protein. The heterodimer gE/gI then redistributes to cell junctions to promote cell-cell spread later in the infection.</text>
</comment>
<comment type="PTM">
    <text evidence="11">Phosphorylated on serines within the acidic cluster. Phosphorylation determines whether endocytosed viral gE traffics to the trans-Golgi network or recycles to the cell membrane.</text>
</comment>
<comment type="PTM">
    <text evidence="10">N-glycosylated, and sulfated.</text>
</comment>
<comment type="similarity">
    <text evidence="11">Belongs to the alphaherpesvirinae glycoprotein E family.</text>
</comment>
<keyword id="KW-0002">3D-structure</keyword>
<keyword id="KW-1015">Disulfide bond</keyword>
<keyword id="KW-0325">Glycoprotein</keyword>
<keyword id="KW-1031">Host cell junction</keyword>
<keyword id="KW-1032">Host cell membrane</keyword>
<keyword id="KW-1039">Host endosome</keyword>
<keyword id="KW-1040">Host Golgi apparatus</keyword>
<keyword id="KW-1043">Host membrane</keyword>
<keyword id="KW-0945">Host-virus interaction</keyword>
<keyword id="KW-0472">Membrane</keyword>
<keyword id="KW-0597">Phosphoprotein</keyword>
<keyword id="KW-1185">Reference proteome</keyword>
<keyword id="KW-0732">Signal</keyword>
<keyword id="KW-0765">Sulfation</keyword>
<keyword id="KW-0812">Transmembrane</keyword>
<keyword id="KW-1133">Transmembrane helix</keyword>
<keyword id="KW-0261">Viral envelope protein</keyword>
<keyword id="KW-0899">Viral immunoevasion</keyword>
<keyword id="KW-0946">Virion</keyword>
<evidence type="ECO:0000250" key="1"/>
<evidence type="ECO:0000255" key="2"/>
<evidence type="ECO:0000256" key="3">
    <source>
        <dbReference type="SAM" id="MobiDB-lite"/>
    </source>
</evidence>
<evidence type="ECO:0000269" key="4">
    <source>
    </source>
</evidence>
<evidence type="ECO:0000269" key="5">
    <source>
    </source>
</evidence>
<evidence type="ECO:0000269" key="6">
    <source>
    </source>
</evidence>
<evidence type="ECO:0000269" key="7">
    <source>
    </source>
</evidence>
<evidence type="ECO:0000269" key="8">
    <source>
    </source>
</evidence>
<evidence type="ECO:0000269" key="9">
    <source>
    </source>
</evidence>
<evidence type="ECO:0000269" key="10">
    <source>
    </source>
</evidence>
<evidence type="ECO:0000305" key="11"/>
<evidence type="ECO:0000305" key="12">
    <source>
    </source>
</evidence>
<evidence type="ECO:0007829" key="13">
    <source>
        <dbReference type="PDB" id="2GIY"/>
    </source>
</evidence>
<sequence>MDRGAVVGFLLGVCVVSCLAGTPKTSWRRVSVGEDVSLLPAPGPTGRGPTQKLLWAVEPLDGCGPLHPSWVSLMPPKQVPETVVDAACMRAPVPLAMAYAPPAPSATGGLRTDFVWQERAAVVNRSLVIHGVRETDSGLYTLSVGDIKDPARQVASVVLVVQPAPVPTPPPTPADYDEDDNDEGEDESLAGTPASGTPRLPPPPAPPRSWPSAPEVSHVRGVTVRMETPEAILFSPGETFSTNVSIHAIAHDDQTYSMDVVWLRFDVPTSCAEMRIYESCLYHPQLPECLSPADAPCAASTWTSRLAVRSYAGCSRTNPPPRCSAEAHMEPVPGLAWQAASVNLEFRDASPQHSGLYLCVVYVNDHIHAWGHITISTAAQYRNAVVEQPLPQRGADLAEPTHPHVGAPPHAPPTHGALRLGAVMGAALLLSALGLSVWACMTCWRRRAWRAVKSRASGKGPTYIRVADSELYADWSSDSEGERDQVPWLAPPERPDSPSTNGSGFEILSPTAPSVYPRSDGHQSRRQLTTFGSGRPDRRYSQASDSSVFW</sequence>
<gene>
    <name type="primary">gE</name>
    <name type="ORF">US8</name>
</gene>
<protein>
    <recommendedName>
        <fullName>Envelope glycoprotein E</fullName>
        <shortName>gE</shortName>
    </recommendedName>
    <alternativeName>
        <fullName>gE-1</fullName>
    </alternativeName>
</protein>
<accession>P04488</accession>
<accession>B9VQK2</accession>
<accession>Q09I69</accession>
<name>GE_HHV11</name>
<feature type="signal peptide" evidence="2">
    <location>
        <begin position="1"/>
        <end position="20"/>
    </location>
</feature>
<feature type="chain" id="PRO_0000038225" description="Envelope glycoprotein E">
    <location>
        <begin position="21"/>
        <end position="550"/>
    </location>
</feature>
<feature type="topological domain" description="Virion surface" evidence="2">
    <location>
        <begin position="21"/>
        <end position="419"/>
    </location>
</feature>
<feature type="transmembrane region" description="Helical" evidence="2">
    <location>
        <begin position="420"/>
        <end position="440"/>
    </location>
</feature>
<feature type="topological domain" description="Intravirion" evidence="2">
    <location>
        <begin position="441"/>
        <end position="550"/>
    </location>
</feature>
<feature type="region of interest" description="Interaction with gI" evidence="1">
    <location>
        <begin position="63"/>
        <end position="88"/>
    </location>
</feature>
<feature type="region of interest" description="Disordered" evidence="3">
    <location>
        <begin position="162"/>
        <end position="214"/>
    </location>
</feature>
<feature type="region of interest" description="Fc-binding">
    <location>
        <begin position="235"/>
        <end position="380"/>
    </location>
</feature>
<feature type="region of interest" description="Disordered" evidence="3">
    <location>
        <begin position="394"/>
        <end position="413"/>
    </location>
</feature>
<feature type="region of interest" description="Interaction with VP22 and UL11" evidence="7">
    <location>
        <begin position="470"/>
        <end position="495"/>
    </location>
</feature>
<feature type="region of interest" description="Disordered" evidence="3">
    <location>
        <begin position="476"/>
        <end position="550"/>
    </location>
</feature>
<feature type="region of interest" description="Acidic">
    <location>
        <begin position="476"/>
        <end position="484"/>
    </location>
</feature>
<feature type="short sequence motif" description="Internalization motif" evidence="2">
    <location>
        <begin position="463"/>
        <end position="466"/>
    </location>
</feature>
<feature type="short sequence motif" description="Internalization motif" evidence="2">
    <location>
        <begin position="472"/>
        <end position="475"/>
    </location>
</feature>
<feature type="compositionally biased region" description="Pro residues" evidence="3">
    <location>
        <begin position="164"/>
        <end position="173"/>
    </location>
</feature>
<feature type="compositionally biased region" description="Acidic residues" evidence="3">
    <location>
        <begin position="175"/>
        <end position="188"/>
    </location>
</feature>
<feature type="compositionally biased region" description="Pro residues" evidence="3">
    <location>
        <begin position="199"/>
        <end position="209"/>
    </location>
</feature>
<feature type="compositionally biased region" description="Low complexity" evidence="3">
    <location>
        <begin position="403"/>
        <end position="413"/>
    </location>
</feature>
<feature type="compositionally biased region" description="Polar residues" evidence="3">
    <location>
        <begin position="541"/>
        <end position="550"/>
    </location>
</feature>
<feature type="modified residue" description="Sulfotyrosine; by host" evidence="2">
    <location>
        <position position="176"/>
    </location>
</feature>
<feature type="modified residue" description="Phosphoserine; by host CK2" evidence="12">
    <location>
        <position position="476"/>
    </location>
</feature>
<feature type="modified residue" description="Phosphoserine; by host CK2" evidence="12">
    <location>
        <position position="477"/>
    </location>
</feature>
<feature type="modified residue" description="Phosphoserine" evidence="11">
    <location>
        <position position="503"/>
    </location>
</feature>
<feature type="glycosylation site" description="N-linked (GlcNAc...) asparagine; by host" evidence="2">
    <location>
        <position position="124"/>
    </location>
</feature>
<feature type="glycosylation site" description="N-linked (GlcNAc...) asparagine; by host" evidence="2">
    <location>
        <position position="243"/>
    </location>
</feature>
<feature type="disulfide bond" evidence="5">
    <location>
        <begin position="271"/>
        <end position="297"/>
    </location>
</feature>
<feature type="disulfide bond" evidence="5">
    <location>
        <begin position="280"/>
        <end position="289"/>
    </location>
</feature>
<feature type="disulfide bond" evidence="5">
    <location>
        <begin position="314"/>
        <end position="323"/>
    </location>
</feature>
<feature type="sequence variant" description="In strain: Nonneuroinvasive mutant HF10.">
    <original>A</original>
    <variation>T</variation>
    <location>
        <position position="120"/>
    </location>
</feature>
<feature type="sequence variant" description="In strain: Nonneuroinvasive mutant HF10.">
    <original>H</original>
    <variation>Y</variation>
    <location>
        <position position="130"/>
    </location>
</feature>
<feature type="sequence variant" description="In strain: Nonneuroinvasive mutant HF10.">
    <original>S</original>
    <variation>F</variation>
    <location>
        <position position="143"/>
    </location>
</feature>
<feature type="sequence variant" description="In strain: Nonneuroinvasive mutant HF10.">
    <original>T</original>
    <variation>A</variation>
    <location>
        <position position="239"/>
    </location>
</feature>
<feature type="sequence variant" description="In strain: Nonneuroinvasive mutant HF10.">
    <original>S</original>
    <variation>A</variation>
    <location>
        <position position="257"/>
    </location>
</feature>
<feature type="sequence variant" description="In strain: Nonneuroinvasive mutant HF10.">
    <original>A</original>
    <variation>V</variation>
    <location>
        <position position="432"/>
    </location>
</feature>
<feature type="strand" evidence="13">
    <location>
        <begin position="221"/>
        <end position="227"/>
    </location>
</feature>
<feature type="strand" evidence="13">
    <location>
        <begin position="230"/>
        <end position="233"/>
    </location>
</feature>
<feature type="strand" evidence="13">
    <location>
        <begin position="245"/>
        <end position="253"/>
    </location>
</feature>
<feature type="strand" evidence="13">
    <location>
        <begin position="256"/>
        <end position="265"/>
    </location>
</feature>
<feature type="strand" evidence="13">
    <location>
        <begin position="272"/>
        <end position="277"/>
    </location>
</feature>
<feature type="helix" evidence="13">
    <location>
        <begin position="278"/>
        <end position="282"/>
    </location>
</feature>
<feature type="helix" evidence="13">
    <location>
        <begin position="287"/>
        <end position="290"/>
    </location>
</feature>
<feature type="helix" evidence="13">
    <location>
        <begin position="295"/>
        <end position="297"/>
    </location>
</feature>
<feature type="strand" evidence="13">
    <location>
        <begin position="306"/>
        <end position="315"/>
    </location>
</feature>
<feature type="turn" evidence="13">
    <location>
        <begin position="320"/>
        <end position="323"/>
    </location>
</feature>
<feature type="strand" evidence="13">
    <location>
        <begin position="324"/>
        <end position="329"/>
    </location>
</feature>
<feature type="strand" evidence="13">
    <location>
        <begin position="345"/>
        <end position="348"/>
    </location>
</feature>
<feature type="helix" evidence="13">
    <location>
        <begin position="351"/>
        <end position="353"/>
    </location>
</feature>
<feature type="strand" evidence="13">
    <location>
        <begin position="355"/>
        <end position="363"/>
    </location>
</feature>
<feature type="strand" evidence="13">
    <location>
        <begin position="366"/>
        <end position="376"/>
    </location>
</feature>
<feature type="turn" evidence="13">
    <location>
        <begin position="378"/>
        <end position="380"/>
    </location>
</feature>
<feature type="strand" evidence="13">
    <location>
        <begin position="383"/>
        <end position="387"/>
    </location>
</feature>
<organism>
    <name type="scientific">Human herpesvirus 1 (strain 17)</name>
    <name type="common">HHV-1</name>
    <name type="synonym">Human herpes simplex virus 1</name>
    <dbReference type="NCBI Taxonomy" id="10299"/>
    <lineage>
        <taxon>Viruses</taxon>
        <taxon>Duplodnaviria</taxon>
        <taxon>Heunggongvirae</taxon>
        <taxon>Peploviricota</taxon>
        <taxon>Herviviricetes</taxon>
        <taxon>Herpesvirales</taxon>
        <taxon>Orthoherpesviridae</taxon>
        <taxon>Alphaherpesvirinae</taxon>
        <taxon>Simplexvirus</taxon>
        <taxon>Simplexvirus humanalpha1</taxon>
        <taxon>Human herpesvirus 1</taxon>
    </lineage>
</organism>
<reference key="1">
    <citation type="journal article" date="1985" name="J. Mol. Biol.">
        <title>Sequence determination and genetic content of the short unique region in the genome of herpes simplex virus type 1.</title>
        <authorList>
            <person name="McGeoch D.J."/>
            <person name="Dolan A."/>
            <person name="Donald S."/>
            <person name="Rixon F.J."/>
        </authorList>
    </citation>
    <scope>NUCLEOTIDE SEQUENCE [GENOMIC DNA]</scope>
</reference>
<reference key="2">
    <citation type="journal article" date="2007" name="Microbes Infect.">
        <title>Determination and analysis of the DNA sequence of highly attenuated herpes simplex virus type 1 mutant HF10, a potential oncolytic virus.</title>
        <authorList>
            <person name="Ushijima Y."/>
            <person name="Luo C."/>
            <person name="Goshima F."/>
            <person name="Yamauchi Y."/>
            <person name="Kimura H."/>
            <person name="Nishiyama Y."/>
        </authorList>
    </citation>
    <scope>NUCLEOTIDE SEQUENCE [LARGE SCALE GENOMIC DNA]</scope>
    <source>
        <strain>Nonneuroinvasive mutant HF10</strain>
    </source>
</reference>
<reference key="3">
    <citation type="submission" date="2008-12" db="EMBL/GenBank/DDBJ databases">
        <title>Herpes simplex virus type 1 bacterial artificial chromosome.</title>
        <authorList>
            <person name="Cunningham C."/>
            <person name="Davison A.J."/>
        </authorList>
    </citation>
    <scope>NUCLEOTIDE SEQUENCE [LARGE SCALE GENOMIC DNA]</scope>
    <source>
        <strain>17 syn+</strain>
    </source>
</reference>
<reference key="4">
    <citation type="journal article" date="1983" name="J. Gen. Virol.">
        <title>Processing of glycoproteins induced by herpes simplex virus type 1: sulphation and nature of the oligosaccharide linkages.</title>
        <authorList>
            <person name="Hope R.G."/>
            <person name="Marsden H.S."/>
        </authorList>
    </citation>
    <scope>GLYCOSYLATION</scope>
    <scope>SULFATION</scope>
</reference>
<reference key="5">
    <citation type="journal article" date="1988" name="J. Virol.">
        <title>Herpes simplex virus immunoglobulin G Fc receptor activity depends on a complex of two viral glycoproteins, gE and gI.</title>
        <authorList>
            <person name="Johnson D.C."/>
            <person name="Frame M.C."/>
            <person name="Ligas M.W."/>
            <person name="Cross A.M."/>
            <person name="Stow N.D."/>
        </authorList>
    </citation>
    <scope>FUNCTION</scope>
    <scope>INTERACTION WITH GLYCOPROTEIN I</scope>
    <source>
        <strain>17 syn+</strain>
        <strain>F</strain>
    </source>
</reference>
<reference key="6">
    <citation type="journal article" date="2000" name="J. Gen. Virol.">
        <title>The C-terminal cytoplasmic tail of herpes simplex virus type 1 gE protein is phosphorylated in vivo and in vitro by cellular enzymes in the absence of other viral proteins.</title>
        <authorList>
            <person name="Miriagou V."/>
            <person name="Stevanato L."/>
            <person name="Manservigi R."/>
            <person name="Mavromara P."/>
        </authorList>
    </citation>
    <scope>PHOSPHORYLATION AT SER-476 AND SER-477</scope>
</reference>
<reference key="7">
    <citation type="journal article" date="2004" name="J. Biol. Chem.">
        <title>pH dependence and stoichiometry of binding to the Fc region of IgG by the herpes simplex virus Fc receptor gE-gI.</title>
        <authorList>
            <person name="Sprague E.R."/>
            <person name="Martin W.L."/>
            <person name="Bjorkman P.J."/>
        </authorList>
    </citation>
    <scope>FUNCTION</scope>
    <source>
        <strain>KOS</strain>
    </source>
</reference>
<reference key="8">
    <citation type="journal article" date="2007" name="J. Virol.">
        <title>Cytoplasmic residues of herpes simplex virus glycoprotein gE required for secondary envelopment and binding of tegument proteins VP22 and UL11 to gE and gD.</title>
        <authorList>
            <person name="Farnsworth A."/>
            <person name="Wisner T.W."/>
            <person name="Johnson D.C."/>
        </authorList>
    </citation>
    <scope>INTERACTION WITH VP22 AND UL11 TEGUMENT PROTEINS</scope>
    <source>
        <strain>F</strain>
    </source>
</reference>
<reference key="9">
    <citation type="journal article" date="2007" name="Virology">
        <title>A conserved region of the herpes simplex virus type 1 tegument protein VP22 facilitates interaction with the cytoplasmic tail of glycoprotein E (gE).</title>
        <authorList>
            <person name="O'Regan K.J."/>
            <person name="Bucks M.A."/>
            <person name="Murphy M.A."/>
            <person name="Wills J.W."/>
            <person name="Courtney R.J."/>
        </authorList>
    </citation>
    <scope>INTERACTION WITH VP22 TEGUMENT PROTEIN</scope>
    <source>
        <strain>17 syn+</strain>
    </source>
</reference>
<reference key="10">
    <citation type="journal article" date="2009" name="J. Virol.">
        <title>Virion incorporation of the herpes simplex virus type 1 tegument protein VP22 occurs via glycoprotein E-specific recruitment to the late secretory pathway.</title>
        <authorList>
            <person name="Stylianou J."/>
            <person name="Maringer K."/>
            <person name="Cook R."/>
            <person name="Bernard E."/>
            <person name="Elliott G."/>
        </authorList>
    </citation>
    <scope>INTERACTION WITH VP22 TEGUMENT PROTEIN</scope>
</reference>
<reference key="11">
    <citation type="journal article" date="2006" name="PLoS Biol.">
        <title>Crystal structure of the HSV-1 Fc receptor bound to Fc reveals a mechanism for antibody bipolar bridging.</title>
        <authorList>
            <person name="Sprague E.R."/>
            <person name="Wang C."/>
            <person name="Baker D."/>
            <person name="Bjorkman P.J."/>
        </authorList>
    </citation>
    <scope>X-RAY CRYSTALLOGRAPHY (1.78 ANGSTROMS) OF 213-390</scope>
    <scope>X-RAY CRYSTALLOGRAPHY (5.0 ANGSTROMS) OF 21-419 IN COMPLEX WITH HOST FC RECEPTOR</scope>
    <scope>DISULFIDE BONDS</scope>
</reference>
<organismHost>
    <name type="scientific">Homo sapiens</name>
    <name type="common">Human</name>
    <dbReference type="NCBI Taxonomy" id="9606"/>
</organismHost>